<evidence type="ECO:0000250" key="1"/>
<evidence type="ECO:0000250" key="2">
    <source>
        <dbReference type="UniProtKB" id="Q9Y5Q5"/>
    </source>
</evidence>
<evidence type="ECO:0000250" key="3">
    <source>
        <dbReference type="UniProtKB" id="Q9Z319"/>
    </source>
</evidence>
<evidence type="ECO:0000255" key="4"/>
<evidence type="ECO:0000255" key="5">
    <source>
        <dbReference type="PROSITE-ProRule" id="PRU00090"/>
    </source>
</evidence>
<evidence type="ECO:0000255" key="6">
    <source>
        <dbReference type="PROSITE-ProRule" id="PRU00124"/>
    </source>
</evidence>
<evidence type="ECO:0000255" key="7">
    <source>
        <dbReference type="PROSITE-ProRule" id="PRU00196"/>
    </source>
</evidence>
<evidence type="ECO:0000255" key="8">
    <source>
        <dbReference type="PROSITE-ProRule" id="PRU00274"/>
    </source>
</evidence>
<evidence type="ECO:0000269" key="9">
    <source>
    </source>
</evidence>
<evidence type="ECO:0000269" key="10">
    <source>
    </source>
</evidence>
<evidence type="ECO:0000269" key="11">
    <source>
    </source>
</evidence>
<evidence type="ECO:0000305" key="12"/>
<evidence type="ECO:0000305" key="13">
    <source>
    </source>
</evidence>
<proteinExistence type="evidence at protein level"/>
<organism>
    <name type="scientific">Rattus norvegicus</name>
    <name type="common">Rat</name>
    <dbReference type="NCBI Taxonomy" id="10116"/>
    <lineage>
        <taxon>Eukaryota</taxon>
        <taxon>Metazoa</taxon>
        <taxon>Chordata</taxon>
        <taxon>Craniata</taxon>
        <taxon>Vertebrata</taxon>
        <taxon>Euteleostomi</taxon>
        <taxon>Mammalia</taxon>
        <taxon>Eutheria</taxon>
        <taxon>Euarchontoglires</taxon>
        <taxon>Glires</taxon>
        <taxon>Rodentia</taxon>
        <taxon>Myomorpha</taxon>
        <taxon>Muroidea</taxon>
        <taxon>Muridae</taxon>
        <taxon>Murinae</taxon>
        <taxon>Rattus</taxon>
    </lineage>
</organism>
<protein>
    <recommendedName>
        <fullName>Atrial natriuretic peptide-converting enzyme</fullName>
        <ecNumber>3.4.21.-</ecNumber>
    </recommendedName>
    <alternativeName>
        <fullName>Corin</fullName>
    </alternativeName>
    <alternativeName>
        <fullName>Pro-ANP-converting enzyme</fullName>
    </alternativeName>
    <component>
        <recommendedName>
            <fullName>Atrial natriuretic peptide-converting enzyme, N-terminal propeptide</fullName>
        </recommendedName>
    </component>
    <component>
        <recommendedName>
            <fullName>Atrial natriuretic peptide-converting enzyme, activated protease fragment</fullName>
        </recommendedName>
    </component>
    <component>
        <recommendedName>
            <fullName>Atrial natriuretic peptide-converting enzyme, 180 kDa soluble fragment</fullName>
        </recommendedName>
    </component>
</protein>
<feature type="chain" id="PRO_0000391762" description="Atrial natriuretic peptide-converting enzyme">
    <location>
        <begin position="1"/>
        <end position="1111"/>
    </location>
</feature>
<feature type="chain" id="PRO_0000391763" description="Atrial natriuretic peptide-converting enzyme, N-terminal propeptide" evidence="12">
    <location>
        <begin position="1"/>
        <end position="866"/>
    </location>
</feature>
<feature type="chain" id="PRO_0000417988" description="Atrial natriuretic peptide-converting enzyme, 180 kDa soluble fragment" evidence="1">
    <location>
        <begin status="unknown"/>
        <end position="866"/>
    </location>
</feature>
<feature type="chain" id="PRO_0000391764" description="Atrial natriuretic peptide-converting enzyme, activated protease fragment" evidence="12">
    <location>
        <begin position="867"/>
        <end position="1111"/>
    </location>
</feature>
<feature type="topological domain" description="Cytoplasmic" evidence="4">
    <location>
        <begin position="1"/>
        <end position="112"/>
    </location>
</feature>
<feature type="transmembrane region" description="Helical; Signal-anchor for type II membrane protein" evidence="4">
    <location>
        <begin position="113"/>
        <end position="133"/>
    </location>
</feature>
<feature type="topological domain" description="Extracellular" evidence="4">
    <location>
        <begin position="134"/>
        <end position="1111"/>
    </location>
</feature>
<feature type="domain" description="FZ 1" evidence="5">
    <location>
        <begin position="199"/>
        <end position="325"/>
    </location>
</feature>
<feature type="domain" description="LDL-receptor class A 1" evidence="6">
    <location>
        <begin position="334"/>
        <end position="371"/>
    </location>
</feature>
<feature type="domain" description="LDL-receptor class A 2" evidence="6">
    <location>
        <begin position="371"/>
        <end position="407"/>
    </location>
</feature>
<feature type="domain" description="LDL-receptor class A 3" evidence="6">
    <location>
        <begin position="407"/>
        <end position="444"/>
    </location>
</feature>
<feature type="domain" description="LDL-receptor class A 4" evidence="6">
    <location>
        <begin position="444"/>
        <end position="481"/>
    </location>
</feature>
<feature type="domain" description="FZ 2" evidence="5">
    <location>
        <begin position="516"/>
        <end position="639"/>
    </location>
</feature>
<feature type="domain" description="LDL-receptor class A 5" evidence="6">
    <location>
        <begin position="645"/>
        <end position="681"/>
    </location>
</feature>
<feature type="domain" description="LDL-receptor class A 6" evidence="6">
    <location>
        <begin position="681"/>
        <end position="719"/>
    </location>
</feature>
<feature type="domain" description="LDL-receptor class A 7" evidence="6">
    <location>
        <begin position="720"/>
        <end position="756"/>
    </location>
</feature>
<feature type="domain" description="SRCR" evidence="7">
    <location>
        <begin position="756"/>
        <end position="851"/>
    </location>
</feature>
<feature type="domain" description="Peptidase S1" evidence="8">
    <location>
        <begin position="867"/>
        <end position="1100"/>
    </location>
</feature>
<feature type="short sequence motif" description="DDNN motif">
    <location>
        <begin position="93"/>
        <end position="96"/>
    </location>
</feature>
<feature type="active site" description="Charge relay system" evidence="8">
    <location>
        <position position="908"/>
    </location>
</feature>
<feature type="active site" description="Charge relay system" evidence="8">
    <location>
        <position position="957"/>
    </location>
</feature>
<feature type="active site" description="Charge relay system" evidence="8">
    <location>
        <position position="1050"/>
    </location>
</feature>
<feature type="site" description="Cleavage" evidence="12">
    <location>
        <begin position="866"/>
        <end position="867"/>
    </location>
</feature>
<feature type="glycosylation site" description="N-linked (GlcNAc...) asparagine" evidence="4">
    <location>
        <position position="147"/>
    </location>
</feature>
<feature type="glycosylation site" description="N-linked (GlcNAc...) asparagine" evidence="4">
    <location>
        <position position="296"/>
    </location>
</feature>
<feature type="glycosylation site" description="N-linked (GlcNAc...) asparagine" evidence="4">
    <location>
        <position position="409"/>
    </location>
</feature>
<feature type="glycosylation site" description="N-linked (GlcNAc...) asparagine" evidence="4">
    <location>
        <position position="535"/>
    </location>
</feature>
<feature type="glycosylation site" description="N-linked (GlcNAc...) asparagine" evidence="4">
    <location>
        <position position="763"/>
    </location>
</feature>
<feature type="disulfide bond" evidence="1">
    <location>
        <begin position="204"/>
        <end position="264"/>
    </location>
</feature>
<feature type="disulfide bond" evidence="1">
    <location>
        <begin position="212"/>
        <end position="257"/>
    </location>
</feature>
<feature type="disulfide bond" evidence="1">
    <location>
        <begin position="248"/>
        <end position="288"/>
    </location>
</feature>
<feature type="disulfide bond" evidence="1">
    <location>
        <begin position="277"/>
        <end position="322"/>
    </location>
</feature>
<feature type="disulfide bond" evidence="1">
    <location>
        <begin position="281"/>
        <end position="305"/>
    </location>
</feature>
<feature type="disulfide bond" evidence="1">
    <location>
        <begin position="335"/>
        <end position="348"/>
    </location>
</feature>
<feature type="disulfide bond" evidence="1">
    <location>
        <begin position="343"/>
        <end position="361"/>
    </location>
</feature>
<feature type="disulfide bond" evidence="1">
    <location>
        <begin position="355"/>
        <end position="370"/>
    </location>
</feature>
<feature type="disulfide bond" evidence="1">
    <location>
        <begin position="372"/>
        <end position="384"/>
    </location>
</feature>
<feature type="disulfide bond" evidence="1">
    <location>
        <begin position="379"/>
        <end position="397"/>
    </location>
</feature>
<feature type="disulfide bond" evidence="1">
    <location>
        <begin position="391"/>
        <end position="406"/>
    </location>
</feature>
<feature type="disulfide bond" evidence="1">
    <location>
        <begin position="408"/>
        <end position="421"/>
    </location>
</feature>
<feature type="disulfide bond" evidence="1">
    <location>
        <begin position="416"/>
        <end position="434"/>
    </location>
</feature>
<feature type="disulfide bond" evidence="1">
    <location>
        <begin position="428"/>
        <end position="443"/>
    </location>
</feature>
<feature type="disulfide bond" evidence="1">
    <location>
        <begin position="445"/>
        <end position="458"/>
    </location>
</feature>
<feature type="disulfide bond" evidence="1">
    <location>
        <begin position="453"/>
        <end position="471"/>
    </location>
</feature>
<feature type="disulfide bond" evidence="1">
    <location>
        <begin position="465"/>
        <end position="480"/>
    </location>
</feature>
<feature type="disulfide bond" evidence="1">
    <location>
        <begin position="521"/>
        <end position="584"/>
    </location>
</feature>
<feature type="disulfide bond" evidence="1">
    <location>
        <begin position="529"/>
        <end position="577"/>
    </location>
</feature>
<feature type="disulfide bond" evidence="1">
    <location>
        <begin position="568"/>
        <end position="606"/>
    </location>
</feature>
<feature type="disulfide bond" evidence="1">
    <location>
        <begin position="595"/>
        <end position="636"/>
    </location>
</feature>
<feature type="disulfide bond" evidence="1">
    <location>
        <begin position="599"/>
        <end position="623"/>
    </location>
</feature>
<feature type="disulfide bond" evidence="1">
    <location>
        <begin position="646"/>
        <end position="658"/>
    </location>
</feature>
<feature type="disulfide bond" evidence="1">
    <location>
        <begin position="653"/>
        <end position="671"/>
    </location>
</feature>
<feature type="disulfide bond" evidence="1">
    <location>
        <begin position="665"/>
        <end position="680"/>
    </location>
</feature>
<feature type="disulfide bond" evidence="1">
    <location>
        <begin position="682"/>
        <end position="696"/>
    </location>
</feature>
<feature type="disulfide bond" evidence="1">
    <location>
        <begin position="690"/>
        <end position="709"/>
    </location>
</feature>
<feature type="disulfide bond" evidence="1">
    <location>
        <begin position="703"/>
        <end position="718"/>
    </location>
</feature>
<feature type="disulfide bond" evidence="1">
    <location>
        <begin position="721"/>
        <end position="733"/>
    </location>
</feature>
<feature type="disulfide bond" evidence="1">
    <location>
        <begin position="728"/>
        <end position="746"/>
    </location>
</feature>
<feature type="disulfide bond" evidence="1">
    <location>
        <begin position="740"/>
        <end position="755"/>
    </location>
</feature>
<feature type="disulfide bond" description="Interchain (between N-terminal propeptide and activated protease fragment chains)" evidence="5 6 7 8">
    <location>
        <begin position="855"/>
        <end position="977"/>
    </location>
</feature>
<feature type="disulfide bond" evidence="1">
    <location>
        <begin position="893"/>
        <end position="909"/>
    </location>
</feature>
<feature type="disulfide bond" evidence="1">
    <location>
        <begin position="991"/>
        <end position="1056"/>
    </location>
</feature>
<feature type="disulfide bond" evidence="1">
    <location>
        <begin position="1020"/>
        <end position="1035"/>
    </location>
</feature>
<feature type="mutagenesis site" description="Impairs proteolytic processing and activation." evidence="10">
    <original>R</original>
    <variation>A</variation>
    <location>
        <position position="866"/>
    </location>
</feature>
<feature type="mutagenesis site" description="Prevents proteolytic processing and activation; when associated with S-1087." evidence="10">
    <original>N</original>
    <variation>S</variation>
    <location>
        <position position="968"/>
    </location>
</feature>
<feature type="mutagenesis site" description="Prevents proteolytic processing and activation; when associated with S-968." evidence="10">
    <original>N</original>
    <variation>S</variation>
    <location>
        <position position="1087"/>
    </location>
</feature>
<feature type="sequence conflict" description="In Ref. 1; AAO86772." evidence="12" ref="1">
    <original>P</original>
    <variation>S</variation>
    <location>
        <position position="178"/>
    </location>
</feature>
<feature type="sequence conflict" description="In Ref. 1; AAO86772." evidence="12" ref="1">
    <original>R</original>
    <variation>T</variation>
    <location>
        <position position="320"/>
    </location>
</feature>
<feature type="sequence conflict" description="In Ref. 1; AAO86772." evidence="12" ref="1">
    <original>I</original>
    <variation>G</variation>
    <location>
        <position position="1048"/>
    </location>
</feature>
<comment type="function">
    <text evidence="2 3 10 11">Serine-type endopeptidase involved in atrial natriuretic peptide (NPPA) processing (PubMed:17660514). Converts through proteolytic cleavage the non-functional propeptide NPPA into the active hormone, thereby regulating blood pressure in heart and promoting natriuresis, diuresis and vasodilation (By similarity). Proteolytic cleavage of pro-NPPA also plays a role in female pregnancy by promoting trophoblast invasion and spiral artery remodeling in uterus (By similarity). Also acts as a regulator of sodium reabsorption in kidney (PubMed:20613715). May also process pro-NPPB the B-type natriuretic peptide (By similarity).</text>
</comment>
<comment type="subcellular location">
    <subcellularLocation>
        <location>Cell membrane</location>
        <topology>Single-pass type II membrane protein</topology>
    </subcellularLocation>
    <subcellularLocation>
        <location>Cytoplasmic vesicle</location>
    </subcellularLocation>
</comment>
<comment type="subcellular location">
    <molecule>Atrial natriuretic peptide-converting enzyme, 180 kDa soluble fragment</molecule>
    <subcellularLocation>
        <location evidence="1">Secreted</location>
    </subcellularLocation>
    <text evidence="1">Soluble form produced following cleavage by ADAM10.</text>
</comment>
<comment type="tissue specificity">
    <text evidence="9">Specifically expressed in heart. Also detected in kidney, aorta, brain and testis. In kidney, present in epithelial cells, with segmental expression in the proximal tubule, thick ascending limb, connecting tubule, and throughout the collecting duct (at protein level).</text>
</comment>
<comment type="induction">
    <text evidence="9">Down-regulated upon experimental heart failure.</text>
</comment>
<comment type="PTM">
    <text evidence="10">N-glycosylated; required for processing and activation.</text>
</comment>
<comment type="PTM">
    <text evidence="13">Activated through proteolytic processing by a trypsin-like protease; cleaved into a N-terminal propeptide and an activated corin protease fragment. Atrial natriuretic peptide-converting enzyme, 180 kDa soluble fragment is produced by cleavage by ADAM10. Cleavage by ADAM10 to produce soluble 180 kDa soluble fragment takes place after the transmembrane region and before FZ 1 (Probable).</text>
</comment>
<comment type="PTM">
    <text evidence="12">A disulfide bond links the activated corin protease fragment and the N-terminal propeptide. The disulfide bond also links the activated corin protease fragment with Atrial natriuretic peptide-converting enzyme, 180 kDa soluble fragment (Probable).</text>
</comment>
<comment type="similarity">
    <text evidence="8">Belongs to the peptidase S1 family.</text>
</comment>
<sequence length="1111" mass="122757">MGRVSFNVRVSSVRRARCSCPGRCYLSCRVPPTTALHALNGFGRAGVLGETAGGTVGLGPSGTRGFLSGSKFQASGSLKDCFGAPPAPDVLRADSSVGEGCPQKLVTANLLRFLLLVLIPCICALIVLLAILLSFVGTLKKVYFKSNDSEPLVTDGEVRVPGVIHVNRYENTGAPSMPPSQSIPAWTPRAPSLEDQSHGNTSTCVNITHRQCQILPYHSTLAPLLPIVKNMDTEKFLKFFTYLHRLGCYQHILLFGCSLAFPKCIVDGDDRHGLLPCRSFCEAAKEGCESVLGMVNSSWPDSLRCSQFRYHTENNSDASRICFSLQQEHGKQSLCGGGESFLCTSGLCISKKLQCNGYNDCDDWSDEAHCNCSEDLFHCGTGKCLHHSLVCDGYDDCGDLSDEQNCDCNLTKEHRCGDGRCIAAEWVCDGDHDCVDKSDEVNCSCPSQGLVECRSGQCIPSTFQCDGDEDCKDGSDEENCSDRPTPCPGGDRGCLDSSCVESCAGSSLCDSDSSLSNCSHCEPITLELCMNLPYNLTHYPNYLGHRTQKEASISWESALFPALVQTNCYKYLMFFACTILVPKCDVNTGQRVPPCRLLCEHSKERCESVLGIVGLQWPEDTDCSQFPEQSSDNQTCLLPNEDVEECSPSHFKCRSGRCVLGSRRCDGQADCDDDSDEENCGCKERDLWECPLNKQCLKHTLICDGFPDCSDSMDEKNCSFCQDDELECANHECVPRDLWCDGWTDCSDSSDEWGCVTLSKNGNSSSFLTVHRSARDHHVCADGWQETLSQLACRQMGLGEPSVTELVQGQEGQQWLRLHSSWENLNGSTLQELLVHRRSCPSGSEISLLCTKQDCGRRPAARMNKRILGGRTSRPGRWPWQCSLQSEPSGHICGCVLIAKKWVLTVAHCFEGREDADVWKVVFGINNLDHPSGFMQTRFVKTILLHPRYSRAVVDYDISVVELSDDINETSYVRPVCLPSPREFLEPDTYCYITGWGHMGNKMPFKLQEGEVRIIPLEQCQSYFDMKTITNRMICAGYESGTVDSCMIDSGGPLVCERPGGQWTLFGLTSWGSVCFSKVLGPGVYSNVSYFVDWIERQIYIQTFLQKKSQG</sequence>
<reference key="1">
    <citation type="journal article" date="2004" name="Am. J. Physiol.">
        <title>Rat corin gene: molecular cloning and reduced expression in experimental heart failure.</title>
        <authorList>
            <person name="Langenickel T.H."/>
            <person name="Pagel I."/>
            <person name="Buttgereit J."/>
            <person name="Tenner K."/>
            <person name="Lindner M."/>
            <person name="Dietz R."/>
            <person name="Willenbrock R."/>
            <person name="Bader M."/>
        </authorList>
    </citation>
    <scope>NUCLEOTIDE SEQUENCE [MRNA]</scope>
    <scope>TISSUE SPECIFICITY</scope>
    <scope>INDUCTION</scope>
    <source>
        <strain>Sprague-Dawley</strain>
    </source>
</reference>
<reference key="2">
    <citation type="journal article" date="2004" name="Nature">
        <title>Genome sequence of the Brown Norway rat yields insights into mammalian evolution.</title>
        <authorList>
            <person name="Gibbs R.A."/>
            <person name="Weinstock G.M."/>
            <person name="Metzker M.L."/>
            <person name="Muzny D.M."/>
            <person name="Sodergren E.J."/>
            <person name="Scherer S."/>
            <person name="Scott G."/>
            <person name="Steffen D."/>
            <person name="Worley K.C."/>
            <person name="Burch P.E."/>
            <person name="Okwuonu G."/>
            <person name="Hines S."/>
            <person name="Lewis L."/>
            <person name="Deramo C."/>
            <person name="Delgado O."/>
            <person name="Dugan-Rocha S."/>
            <person name="Miner G."/>
            <person name="Morgan M."/>
            <person name="Hawes A."/>
            <person name="Gill R."/>
            <person name="Holt R.A."/>
            <person name="Adams M.D."/>
            <person name="Amanatides P.G."/>
            <person name="Baden-Tillson H."/>
            <person name="Barnstead M."/>
            <person name="Chin S."/>
            <person name="Evans C.A."/>
            <person name="Ferriera S."/>
            <person name="Fosler C."/>
            <person name="Glodek A."/>
            <person name="Gu Z."/>
            <person name="Jennings D."/>
            <person name="Kraft C.L."/>
            <person name="Nguyen T."/>
            <person name="Pfannkoch C.M."/>
            <person name="Sitter C."/>
            <person name="Sutton G.G."/>
            <person name="Venter J.C."/>
            <person name="Woodage T."/>
            <person name="Smith D."/>
            <person name="Lee H.-M."/>
            <person name="Gustafson E."/>
            <person name="Cahill P."/>
            <person name="Kana A."/>
            <person name="Doucette-Stamm L."/>
            <person name="Weinstock K."/>
            <person name="Fechtel K."/>
            <person name="Weiss R.B."/>
            <person name="Dunn D.M."/>
            <person name="Green E.D."/>
            <person name="Blakesley R.W."/>
            <person name="Bouffard G.G."/>
            <person name="De Jong P.J."/>
            <person name="Osoegawa K."/>
            <person name="Zhu B."/>
            <person name="Marra M."/>
            <person name="Schein J."/>
            <person name="Bosdet I."/>
            <person name="Fjell C."/>
            <person name="Jones S."/>
            <person name="Krzywinski M."/>
            <person name="Mathewson C."/>
            <person name="Siddiqui A."/>
            <person name="Wye N."/>
            <person name="McPherson J."/>
            <person name="Zhao S."/>
            <person name="Fraser C.M."/>
            <person name="Shetty J."/>
            <person name="Shatsman S."/>
            <person name="Geer K."/>
            <person name="Chen Y."/>
            <person name="Abramzon S."/>
            <person name="Nierman W.C."/>
            <person name="Havlak P.H."/>
            <person name="Chen R."/>
            <person name="Durbin K.J."/>
            <person name="Egan A."/>
            <person name="Ren Y."/>
            <person name="Song X.-Z."/>
            <person name="Li B."/>
            <person name="Liu Y."/>
            <person name="Qin X."/>
            <person name="Cawley S."/>
            <person name="Cooney A.J."/>
            <person name="D'Souza L.M."/>
            <person name="Martin K."/>
            <person name="Wu J.Q."/>
            <person name="Gonzalez-Garay M.L."/>
            <person name="Jackson A.R."/>
            <person name="Kalafus K.J."/>
            <person name="McLeod M.P."/>
            <person name="Milosavljevic A."/>
            <person name="Virk D."/>
            <person name="Volkov A."/>
            <person name="Wheeler D.A."/>
            <person name="Zhang Z."/>
            <person name="Bailey J.A."/>
            <person name="Eichler E.E."/>
            <person name="Tuzun E."/>
            <person name="Birney E."/>
            <person name="Mongin E."/>
            <person name="Ureta-Vidal A."/>
            <person name="Woodwark C."/>
            <person name="Zdobnov E."/>
            <person name="Bork P."/>
            <person name="Suyama M."/>
            <person name="Torrents D."/>
            <person name="Alexandersson M."/>
            <person name="Trask B.J."/>
            <person name="Young J.M."/>
            <person name="Huang H."/>
            <person name="Wang H."/>
            <person name="Xing H."/>
            <person name="Daniels S."/>
            <person name="Gietzen D."/>
            <person name="Schmidt J."/>
            <person name="Stevens K."/>
            <person name="Vitt U."/>
            <person name="Wingrove J."/>
            <person name="Camara F."/>
            <person name="Mar Alba M."/>
            <person name="Abril J.F."/>
            <person name="Guigo R."/>
            <person name="Smit A."/>
            <person name="Dubchak I."/>
            <person name="Rubin E.M."/>
            <person name="Couronne O."/>
            <person name="Poliakov A."/>
            <person name="Huebner N."/>
            <person name="Ganten D."/>
            <person name="Goesele C."/>
            <person name="Hummel O."/>
            <person name="Kreitler T."/>
            <person name="Lee Y.-A."/>
            <person name="Monti J."/>
            <person name="Schulz H."/>
            <person name="Zimdahl H."/>
            <person name="Himmelbauer H."/>
            <person name="Lehrach H."/>
            <person name="Jacob H.J."/>
            <person name="Bromberg S."/>
            <person name="Gullings-Handley J."/>
            <person name="Jensen-Seaman M.I."/>
            <person name="Kwitek A.E."/>
            <person name="Lazar J."/>
            <person name="Pasko D."/>
            <person name="Tonellato P.J."/>
            <person name="Twigger S."/>
            <person name="Ponting C.P."/>
            <person name="Duarte J.M."/>
            <person name="Rice S."/>
            <person name="Goodstadt L."/>
            <person name="Beatson S.A."/>
            <person name="Emes R.D."/>
            <person name="Winter E.E."/>
            <person name="Webber C."/>
            <person name="Brandt P."/>
            <person name="Nyakatura G."/>
            <person name="Adetobi M."/>
            <person name="Chiaromonte F."/>
            <person name="Elnitski L."/>
            <person name="Eswara P."/>
            <person name="Hardison R.C."/>
            <person name="Hou M."/>
            <person name="Kolbe D."/>
            <person name="Makova K."/>
            <person name="Miller W."/>
            <person name="Nekrutenko A."/>
            <person name="Riemer C."/>
            <person name="Schwartz S."/>
            <person name="Taylor J."/>
            <person name="Yang S."/>
            <person name="Zhang Y."/>
            <person name="Lindpaintner K."/>
            <person name="Andrews T.D."/>
            <person name="Caccamo M."/>
            <person name="Clamp M."/>
            <person name="Clarke L."/>
            <person name="Curwen V."/>
            <person name="Durbin R.M."/>
            <person name="Eyras E."/>
            <person name="Searle S.M."/>
            <person name="Cooper G.M."/>
            <person name="Batzoglou S."/>
            <person name="Brudno M."/>
            <person name="Sidow A."/>
            <person name="Stone E.A."/>
            <person name="Payseur B.A."/>
            <person name="Bourque G."/>
            <person name="Lopez-Otin C."/>
            <person name="Puente X.S."/>
            <person name="Chakrabarti K."/>
            <person name="Chatterji S."/>
            <person name="Dewey C."/>
            <person name="Pachter L."/>
            <person name="Bray N."/>
            <person name="Yap V.B."/>
            <person name="Caspi A."/>
            <person name="Tesler G."/>
            <person name="Pevzner P.A."/>
            <person name="Haussler D."/>
            <person name="Roskin K.M."/>
            <person name="Baertsch R."/>
            <person name="Clawson H."/>
            <person name="Furey T.S."/>
            <person name="Hinrichs A.S."/>
            <person name="Karolchik D."/>
            <person name="Kent W.J."/>
            <person name="Rosenbloom K.R."/>
            <person name="Trumbower H."/>
            <person name="Weirauch M."/>
            <person name="Cooper D.N."/>
            <person name="Stenson P.D."/>
            <person name="Ma B."/>
            <person name="Brent M."/>
            <person name="Arumugam M."/>
            <person name="Shteynberg D."/>
            <person name="Copley R.R."/>
            <person name="Taylor M.S."/>
            <person name="Riethman H."/>
            <person name="Mudunuri U."/>
            <person name="Peterson J."/>
            <person name="Guyer M."/>
            <person name="Felsenfeld A."/>
            <person name="Old S."/>
            <person name="Mockrin S."/>
            <person name="Collins F.S."/>
        </authorList>
    </citation>
    <scope>NUCLEOTIDE SEQUENCE [LARGE SCALE GENOMIC DNA]</scope>
    <source>
        <strain>Brown Norway</strain>
    </source>
</reference>
<reference key="3">
    <citation type="journal article" date="2007" name="J. Biol. Chem.">
        <title>Role of glycosylation in corin zymogen activation.</title>
        <authorList>
            <person name="Liao X."/>
            <person name="Wang W."/>
            <person name="Chen S."/>
            <person name="Wu Q."/>
        </authorList>
    </citation>
    <scope>FUNCTION</scope>
    <scope>ACTIVATION</scope>
    <scope>PROTEOLYTIC PROCESSING</scope>
    <scope>MUTAGENESIS OF ARG-866; ASN-968 AND ASN-1087</scope>
    <scope>GLYCOSYLATION</scope>
    <scope>SUBCELLULAR LOCATION</scope>
</reference>
<reference key="4">
    <citation type="journal article" date="2010" name="Kidney Int.">
        <title>Decreased renal corin expression contributes to sodium retention in proteinuric kidney diseases.</title>
        <authorList>
            <person name="Polzin D."/>
            <person name="Kaminski H.J."/>
            <person name="Kastner C."/>
            <person name="Wang W."/>
            <person name="Kramer S."/>
            <person name="Gambaryan S."/>
            <person name="Russwurm M."/>
            <person name="Peters H."/>
            <person name="Wu Q."/>
            <person name="Vandewalle A."/>
            <person name="Bachmann S."/>
            <person name="Theilig F."/>
        </authorList>
    </citation>
    <scope>FUNCTION</scope>
    <scope>SUBCELLULAR LOCATION</scope>
</reference>
<keyword id="KW-1003">Cell membrane</keyword>
<keyword id="KW-0968">Cytoplasmic vesicle</keyword>
<keyword id="KW-1015">Disulfide bond</keyword>
<keyword id="KW-0325">Glycoprotein</keyword>
<keyword id="KW-0378">Hydrolase</keyword>
<keyword id="KW-0472">Membrane</keyword>
<keyword id="KW-0645">Protease</keyword>
<keyword id="KW-1185">Reference proteome</keyword>
<keyword id="KW-0677">Repeat</keyword>
<keyword id="KW-0964">Secreted</keyword>
<keyword id="KW-0720">Serine protease</keyword>
<keyword id="KW-0735">Signal-anchor</keyword>
<keyword id="KW-0812">Transmembrane</keyword>
<keyword id="KW-1133">Transmembrane helix</keyword>
<keyword id="KW-0865">Zymogen</keyword>
<gene>
    <name type="primary">Corin</name>
</gene>
<name>CORIN_RAT</name>
<dbReference type="EC" id="3.4.21.-"/>
<dbReference type="EMBL" id="AY251285">
    <property type="protein sequence ID" value="AAO86772.1"/>
    <property type="molecule type" value="mRNA"/>
</dbReference>
<dbReference type="EMBL" id="AC121481">
    <property type="status" value="NOT_ANNOTATED_CDS"/>
    <property type="molecule type" value="Genomic_DNA"/>
</dbReference>
<dbReference type="RefSeq" id="NP_872279.1">
    <property type="nucleotide sequence ID" value="NM_182473.1"/>
</dbReference>
<dbReference type="SMR" id="Q80YN4"/>
<dbReference type="FunCoup" id="Q80YN4">
    <property type="interactions" value="272"/>
</dbReference>
<dbReference type="STRING" id="10116.ENSRNOP00000061602"/>
<dbReference type="MEROPS" id="S01.019"/>
<dbReference type="GlyCosmos" id="Q80YN4">
    <property type="glycosylation" value="5 sites, No reported glycans"/>
</dbReference>
<dbReference type="GlyGen" id="Q80YN4">
    <property type="glycosylation" value="5 sites"/>
</dbReference>
<dbReference type="PhosphoSitePlus" id="Q80YN4"/>
<dbReference type="PaxDb" id="10116-ENSRNOP00000061602"/>
<dbReference type="GeneID" id="289596"/>
<dbReference type="KEGG" id="rno:289596"/>
<dbReference type="UCSC" id="RGD:727887">
    <property type="organism name" value="rat"/>
</dbReference>
<dbReference type="AGR" id="RGD:727887"/>
<dbReference type="CTD" id="10699"/>
<dbReference type="RGD" id="727887">
    <property type="gene designation" value="Corin"/>
</dbReference>
<dbReference type="eggNOG" id="KOG3577">
    <property type="taxonomic scope" value="Eukaryota"/>
</dbReference>
<dbReference type="eggNOG" id="KOG3627">
    <property type="taxonomic scope" value="Eukaryota"/>
</dbReference>
<dbReference type="InParanoid" id="Q80YN4"/>
<dbReference type="OrthoDB" id="9990982at2759"/>
<dbReference type="Reactome" id="R-RNO-5578768">
    <property type="pathway name" value="Physiological factors"/>
</dbReference>
<dbReference type="PRO" id="PR:Q80YN4"/>
<dbReference type="Proteomes" id="UP000002494">
    <property type="component" value="Unplaced"/>
</dbReference>
<dbReference type="GO" id="GO:0009986">
    <property type="term" value="C:cell surface"/>
    <property type="evidence" value="ECO:0000266"/>
    <property type="project" value="RGD"/>
</dbReference>
<dbReference type="GO" id="GO:0031410">
    <property type="term" value="C:cytoplasmic vesicle"/>
    <property type="evidence" value="ECO:0000314"/>
    <property type="project" value="UniProtKB"/>
</dbReference>
<dbReference type="GO" id="GO:0005576">
    <property type="term" value="C:extracellular region"/>
    <property type="evidence" value="ECO:0007669"/>
    <property type="project" value="UniProtKB-SubCell"/>
</dbReference>
<dbReference type="GO" id="GO:0005886">
    <property type="term" value="C:plasma membrane"/>
    <property type="evidence" value="ECO:0000314"/>
    <property type="project" value="UniProtKB"/>
</dbReference>
<dbReference type="GO" id="GO:0004175">
    <property type="term" value="F:endopeptidase activity"/>
    <property type="evidence" value="ECO:0000266"/>
    <property type="project" value="RGD"/>
</dbReference>
<dbReference type="GO" id="GO:0004252">
    <property type="term" value="F:serine-type endopeptidase activity"/>
    <property type="evidence" value="ECO:0000266"/>
    <property type="project" value="RGD"/>
</dbReference>
<dbReference type="GO" id="GO:0007565">
    <property type="term" value="P:female pregnancy"/>
    <property type="evidence" value="ECO:0000250"/>
    <property type="project" value="UniProtKB"/>
</dbReference>
<dbReference type="GO" id="GO:0016486">
    <property type="term" value="P:peptide hormone processing"/>
    <property type="evidence" value="ECO:0000250"/>
    <property type="project" value="UniProtKB"/>
</dbReference>
<dbReference type="GO" id="GO:0008217">
    <property type="term" value="P:regulation of blood pressure"/>
    <property type="evidence" value="ECO:0000315"/>
    <property type="project" value="UniProtKB"/>
</dbReference>
<dbReference type="GO" id="GO:0035813">
    <property type="term" value="P:regulation of renal sodium excretion"/>
    <property type="evidence" value="ECO:0000315"/>
    <property type="project" value="UniProtKB"/>
</dbReference>
<dbReference type="GO" id="GO:0003050">
    <property type="term" value="P:regulation of systemic arterial blood pressure by atrial natriuretic peptide"/>
    <property type="evidence" value="ECO:0000250"/>
    <property type="project" value="UniProtKB"/>
</dbReference>
<dbReference type="CDD" id="cd07445">
    <property type="entry name" value="CRD_corin_1"/>
    <property type="match status" value="1"/>
</dbReference>
<dbReference type="CDD" id="cd07888">
    <property type="entry name" value="CRD_corin_2"/>
    <property type="match status" value="1"/>
</dbReference>
<dbReference type="CDD" id="cd00112">
    <property type="entry name" value="LDLa"/>
    <property type="match status" value="7"/>
</dbReference>
<dbReference type="CDD" id="cd00190">
    <property type="entry name" value="Tryp_SPc"/>
    <property type="match status" value="1"/>
</dbReference>
<dbReference type="FunFam" id="2.40.10.10:FF:000015">
    <property type="entry name" value="Atrial natriuretic peptide-converting enzyme"/>
    <property type="match status" value="1"/>
</dbReference>
<dbReference type="FunFam" id="4.10.400.10:FF:000083">
    <property type="entry name" value="Atrial natriuretic peptide-converting enzyme"/>
    <property type="match status" value="1"/>
</dbReference>
<dbReference type="FunFam" id="4.10.400.10:FF:000103">
    <property type="entry name" value="Atrial natriuretic peptide-converting enzyme"/>
    <property type="match status" value="1"/>
</dbReference>
<dbReference type="FunFam" id="1.10.2000.10:FF:000013">
    <property type="entry name" value="atrial natriuretic peptide-converting enzyme"/>
    <property type="match status" value="1"/>
</dbReference>
<dbReference type="FunFam" id="4.10.400.10:FF:000054">
    <property type="entry name" value="Corin, serine peptidase"/>
    <property type="match status" value="1"/>
</dbReference>
<dbReference type="FunFam" id="4.10.400.10:FF:000024">
    <property type="entry name" value="Low-density lipoprotein RecePtor related"/>
    <property type="match status" value="1"/>
</dbReference>
<dbReference type="FunFam" id="4.10.400.10:FF:000056">
    <property type="entry name" value="Terribly reduced optic lobes, isoform AM"/>
    <property type="match status" value="1"/>
</dbReference>
<dbReference type="Gene3D" id="1.10.2000.10">
    <property type="entry name" value="Frizzled cysteine-rich domain"/>
    <property type="match status" value="2"/>
</dbReference>
<dbReference type="Gene3D" id="4.10.400.10">
    <property type="entry name" value="Low-density Lipoprotein Receptor"/>
    <property type="match status" value="7"/>
</dbReference>
<dbReference type="Gene3D" id="2.40.10.10">
    <property type="entry name" value="Trypsin-like serine proteases"/>
    <property type="match status" value="1"/>
</dbReference>
<dbReference type="InterPro" id="IPR017052">
    <property type="entry name" value="Corin"/>
</dbReference>
<dbReference type="InterPro" id="IPR041762">
    <property type="entry name" value="Corin_CRD_1"/>
</dbReference>
<dbReference type="InterPro" id="IPR041763">
    <property type="entry name" value="Corin_CRD_2"/>
</dbReference>
<dbReference type="InterPro" id="IPR020067">
    <property type="entry name" value="Frizzled_dom"/>
</dbReference>
<dbReference type="InterPro" id="IPR036790">
    <property type="entry name" value="Frizzled_dom_sf"/>
</dbReference>
<dbReference type="InterPro" id="IPR036055">
    <property type="entry name" value="LDL_receptor-like_sf"/>
</dbReference>
<dbReference type="InterPro" id="IPR023415">
    <property type="entry name" value="LDLR_class-A_CS"/>
</dbReference>
<dbReference type="InterPro" id="IPR002172">
    <property type="entry name" value="LDrepeatLR_classA_rpt"/>
</dbReference>
<dbReference type="InterPro" id="IPR009003">
    <property type="entry name" value="Peptidase_S1_PA"/>
</dbReference>
<dbReference type="InterPro" id="IPR043504">
    <property type="entry name" value="Peptidase_S1_PA_chymotrypsin"/>
</dbReference>
<dbReference type="InterPro" id="IPR001190">
    <property type="entry name" value="SRCR"/>
</dbReference>
<dbReference type="InterPro" id="IPR036772">
    <property type="entry name" value="SRCR-like_dom_sf"/>
</dbReference>
<dbReference type="InterPro" id="IPR001254">
    <property type="entry name" value="Trypsin_dom"/>
</dbReference>
<dbReference type="PANTHER" id="PTHR24252">
    <property type="entry name" value="ACROSIN-RELATED"/>
    <property type="match status" value="1"/>
</dbReference>
<dbReference type="PANTHER" id="PTHR24252:SF11">
    <property type="entry name" value="ATRIAL NATRIURETIC PEPTIDE-CONVERTING ENZYME ISOFORM X1"/>
    <property type="match status" value="1"/>
</dbReference>
<dbReference type="Pfam" id="PF01392">
    <property type="entry name" value="Fz"/>
    <property type="match status" value="2"/>
</dbReference>
<dbReference type="Pfam" id="PF00057">
    <property type="entry name" value="Ldl_recept_a"/>
    <property type="match status" value="6"/>
</dbReference>
<dbReference type="Pfam" id="PF15494">
    <property type="entry name" value="SRCR_2"/>
    <property type="match status" value="1"/>
</dbReference>
<dbReference type="Pfam" id="PF00089">
    <property type="entry name" value="Trypsin"/>
    <property type="match status" value="1"/>
</dbReference>
<dbReference type="PIRSF" id="PIRSF036376">
    <property type="entry name" value="Corin"/>
    <property type="match status" value="1"/>
</dbReference>
<dbReference type="PRINTS" id="PR00261">
    <property type="entry name" value="LDLRECEPTOR"/>
</dbReference>
<dbReference type="SMART" id="SM00063">
    <property type="entry name" value="FRI"/>
    <property type="match status" value="2"/>
</dbReference>
<dbReference type="SMART" id="SM00192">
    <property type="entry name" value="LDLa"/>
    <property type="match status" value="7"/>
</dbReference>
<dbReference type="SMART" id="SM00202">
    <property type="entry name" value="SR"/>
    <property type="match status" value="1"/>
</dbReference>
<dbReference type="SMART" id="SM00020">
    <property type="entry name" value="Tryp_SPc"/>
    <property type="match status" value="1"/>
</dbReference>
<dbReference type="SUPFAM" id="SSF63501">
    <property type="entry name" value="Frizzled cysteine-rich domain"/>
    <property type="match status" value="2"/>
</dbReference>
<dbReference type="SUPFAM" id="SSF57424">
    <property type="entry name" value="LDL receptor-like module"/>
    <property type="match status" value="7"/>
</dbReference>
<dbReference type="SUPFAM" id="SSF56487">
    <property type="entry name" value="SRCR-like"/>
    <property type="match status" value="1"/>
</dbReference>
<dbReference type="SUPFAM" id="SSF50494">
    <property type="entry name" value="Trypsin-like serine proteases"/>
    <property type="match status" value="1"/>
</dbReference>
<dbReference type="PROSITE" id="PS50038">
    <property type="entry name" value="FZ"/>
    <property type="match status" value="2"/>
</dbReference>
<dbReference type="PROSITE" id="PS01209">
    <property type="entry name" value="LDLRA_1"/>
    <property type="match status" value="6"/>
</dbReference>
<dbReference type="PROSITE" id="PS50068">
    <property type="entry name" value="LDLRA_2"/>
    <property type="match status" value="7"/>
</dbReference>
<dbReference type="PROSITE" id="PS00420">
    <property type="entry name" value="SRCR_1"/>
    <property type="match status" value="1"/>
</dbReference>
<dbReference type="PROSITE" id="PS50287">
    <property type="entry name" value="SRCR_2"/>
    <property type="match status" value="1"/>
</dbReference>
<dbReference type="PROSITE" id="PS50240">
    <property type="entry name" value="TRYPSIN_DOM"/>
    <property type="match status" value="1"/>
</dbReference>
<accession>Q80YN4</accession>
<accession>D3ZN44</accession>
<accession>F1LS60</accession>